<keyword id="KW-1284">Encapsulin nanocompartment</keyword>
<comment type="function">
    <text evidence="1">Shell component of a type 2A encapsulin nanocompartment. Forms encapsulin nanocompartments about 24 nm in diameter from 60 monomers. Probably encapsulates at least cysteine desulfurase (CyD) and allows passage of cysteine into its interior, probably involved in sulfur metabolism.</text>
</comment>
<comment type="subunit">
    <text evidence="1 2">Homooligomeric (PubMed:9596734). The encapsulin nanocompartment is formed by 60 subunits; monomers form pentamers which assemble to form shells. There are 12 charged pores where the pentamers meet as well as 3-fold axis channels and dimer channels (By similarity).</text>
</comment>
<comment type="subcellular location">
    <subcellularLocation>
        <location evidence="1">Encapsulin nanocompartment</location>
    </subcellularLocation>
</comment>
<comment type="domain">
    <text evidence="1">Has 4 domains; an N-terminal arm not found in the type 1 subfamily, a discontinuous peripheral domain (P), an elongated loop (E) and the discontinuous axial domain (A).</text>
</comment>
<comment type="miscellaneous">
    <text evidence="2">Dominant antigen for this bacteria, could possibly used in vaccine formulation and/or for diagnosis.</text>
</comment>
<comment type="similarity">
    <text evidence="4">Belongs to the encapsulin family. Family 2A subfamily.</text>
</comment>
<protein>
    <recommendedName>
        <fullName evidence="1">Type 2A encapsulin shell protein</fullName>
    </recommendedName>
    <alternativeName>
        <fullName evidence="3">35 kDa antigen</fullName>
    </alternativeName>
    <alternativeName>
        <fullName>Major membrane protein 1</fullName>
    </alternativeName>
    <alternativeName>
        <fullName>Major membrane protein I</fullName>
        <shortName evidence="3">MMP-I</shortName>
    </alternativeName>
</protein>
<evidence type="ECO:0000250" key="1">
    <source>
        <dbReference type="UniProtKB" id="Q55032"/>
    </source>
</evidence>
<evidence type="ECO:0000269" key="2">
    <source>
    </source>
</evidence>
<evidence type="ECO:0000303" key="3">
    <source>
    </source>
</evidence>
<evidence type="ECO:0000305" key="4"/>
<organism>
    <name type="scientific">Mycobacterium avium</name>
    <dbReference type="NCBI Taxonomy" id="1764"/>
    <lineage>
        <taxon>Bacteria</taxon>
        <taxon>Bacillati</taxon>
        <taxon>Actinomycetota</taxon>
        <taxon>Actinomycetes</taxon>
        <taxon>Mycobacteriales</taxon>
        <taxon>Mycobacteriaceae</taxon>
        <taxon>Mycobacterium</taxon>
        <taxon>Mycobacterium avium complex (MAC)</taxon>
    </lineage>
</organism>
<proteinExistence type="evidence at protein level"/>
<sequence>MTSAQNESQALGDLAARQLANATKTVPQLSTITPRWLLHLLNWVPVEAGIYRVNRVVNPEQVAIKAEAGAGSEEPVPQTYVDYETSPREYTLRSISTLVDIHTRVSDLYSSPHDQIAQQLRLTIETIKERQELELINSPEYGLLAQATGRQTIQTLAGAPTPDDLDALITKVWKTPSFFLTHPLGIAAFGREATYRGVPPPVVSLFGPTQFITWHGIRLPSDKVPVEDGKTKFILVRTGEERQGVVGLFQPGLVGEQAPGLSVRFTGINQSAIATYLVTLYTSLAVLTDDALAVLDDVAVDQFHEYK</sequence>
<feature type="chain" id="PRO_0000096511" description="Type 2A encapsulin shell protein">
    <location>
        <begin position="1"/>
        <end position="307"/>
    </location>
</feature>
<name>ENCP2_MYCAV</name>
<gene>
    <name evidence="4" type="primary">enc</name>
    <name type="synonym">mmpI</name>
</gene>
<dbReference type="EMBL" id="U43835">
    <property type="protein sequence ID" value="AAC18618.1"/>
    <property type="molecule type" value="Genomic_DNA"/>
</dbReference>
<dbReference type="SMR" id="Q48899"/>
<dbReference type="GO" id="GO:0140737">
    <property type="term" value="C:encapsulin nanocompartment"/>
    <property type="evidence" value="ECO:0000305"/>
    <property type="project" value="UniProtKB"/>
</dbReference>
<dbReference type="InterPro" id="IPR049822">
    <property type="entry name" value="Encap_f2a"/>
</dbReference>
<dbReference type="InterPro" id="IPR045641">
    <property type="entry name" value="SrpI-like"/>
</dbReference>
<dbReference type="NCBIfam" id="NF041162">
    <property type="entry name" value="encap_f2a"/>
    <property type="match status" value="1"/>
</dbReference>
<dbReference type="Pfam" id="PF19307">
    <property type="entry name" value="SrpI-like"/>
    <property type="match status" value="1"/>
</dbReference>
<dbReference type="SUPFAM" id="SSF56563">
    <property type="entry name" value="Major capsid protein gp5"/>
    <property type="match status" value="1"/>
</dbReference>
<reference key="1">
    <citation type="journal article" date="1998" name="Infect. Immun.">
        <title>Molecular and immunological analyses of the Mycobacterium avium homolog of the immunodominant Mycobacterium leprae 35-kilodalton protein.</title>
        <authorList>
            <person name="Triccas J.A."/>
            <person name="Winter N."/>
            <person name="Roche P.W."/>
            <person name="Gilpin A."/>
            <person name="Kendrick K.E."/>
            <person name="Britton W.J."/>
        </authorList>
    </citation>
    <scope>NUCLEOTIDE SEQUENCE [GENOMIC DNA]</scope>
    <scope>ANTIGENICITY</scope>
    <scope>SUBUNIT</scope>
    <source>
        <strain>IS94</strain>
    </source>
</reference>
<reference key="2">
    <citation type="journal article" date="2021" name="Nat. Commun.">
        <title>Large-scale computational discovery and analysis of virus-derived microbial nanocompartments.</title>
        <authorList>
            <person name="Andreas M.P."/>
            <person name="Giessen T.W."/>
        </authorList>
    </citation>
    <scope>CLASSIFICATION</scope>
</reference>
<accession>Q48899</accession>